<gene>
    <name evidence="1" type="primary">ybeY</name>
    <name type="ordered locus">SG0672</name>
</gene>
<comment type="function">
    <text evidence="1">Single strand-specific metallo-endoribonuclease involved in late-stage 70S ribosome quality control and in maturation of the 3' terminus of the 16S rRNA.</text>
</comment>
<comment type="cofactor">
    <cofactor evidence="1">
        <name>Zn(2+)</name>
        <dbReference type="ChEBI" id="CHEBI:29105"/>
    </cofactor>
    <text evidence="1">Binds 1 zinc ion.</text>
</comment>
<comment type="subcellular location">
    <subcellularLocation>
        <location evidence="1">Cytoplasm</location>
    </subcellularLocation>
</comment>
<comment type="similarity">
    <text evidence="1">Belongs to the endoribonuclease YbeY family.</text>
</comment>
<keyword id="KW-0963">Cytoplasm</keyword>
<keyword id="KW-0255">Endonuclease</keyword>
<keyword id="KW-0378">Hydrolase</keyword>
<keyword id="KW-0479">Metal-binding</keyword>
<keyword id="KW-0540">Nuclease</keyword>
<keyword id="KW-0690">Ribosome biogenesis</keyword>
<keyword id="KW-0698">rRNA processing</keyword>
<keyword id="KW-0862">Zinc</keyword>
<dbReference type="EC" id="3.1.-.-" evidence="1"/>
<dbReference type="EMBL" id="AM933173">
    <property type="protein sequence ID" value="CAR36568.1"/>
    <property type="molecule type" value="Genomic_DNA"/>
</dbReference>
<dbReference type="RefSeq" id="WP_000084480.1">
    <property type="nucleotide sequence ID" value="NC_011274.1"/>
</dbReference>
<dbReference type="SMR" id="B5R815"/>
<dbReference type="KEGG" id="seg:SG0672"/>
<dbReference type="HOGENOM" id="CLU_106710_0_1_6"/>
<dbReference type="Proteomes" id="UP000008321">
    <property type="component" value="Chromosome"/>
</dbReference>
<dbReference type="GO" id="GO:0005737">
    <property type="term" value="C:cytoplasm"/>
    <property type="evidence" value="ECO:0007669"/>
    <property type="project" value="UniProtKB-SubCell"/>
</dbReference>
<dbReference type="GO" id="GO:0004222">
    <property type="term" value="F:metalloendopeptidase activity"/>
    <property type="evidence" value="ECO:0007669"/>
    <property type="project" value="InterPro"/>
</dbReference>
<dbReference type="GO" id="GO:0004521">
    <property type="term" value="F:RNA endonuclease activity"/>
    <property type="evidence" value="ECO:0007669"/>
    <property type="project" value="UniProtKB-UniRule"/>
</dbReference>
<dbReference type="GO" id="GO:0008270">
    <property type="term" value="F:zinc ion binding"/>
    <property type="evidence" value="ECO:0007669"/>
    <property type="project" value="UniProtKB-UniRule"/>
</dbReference>
<dbReference type="GO" id="GO:0006364">
    <property type="term" value="P:rRNA processing"/>
    <property type="evidence" value="ECO:0007669"/>
    <property type="project" value="UniProtKB-UniRule"/>
</dbReference>
<dbReference type="Gene3D" id="3.40.390.30">
    <property type="entry name" value="Metalloproteases ('zincins'), catalytic domain"/>
    <property type="match status" value="1"/>
</dbReference>
<dbReference type="HAMAP" id="MF_00009">
    <property type="entry name" value="Endoribonucl_YbeY"/>
    <property type="match status" value="1"/>
</dbReference>
<dbReference type="InterPro" id="IPR023091">
    <property type="entry name" value="MetalPrtase_cat_dom_sf_prd"/>
</dbReference>
<dbReference type="InterPro" id="IPR002036">
    <property type="entry name" value="YbeY"/>
</dbReference>
<dbReference type="InterPro" id="IPR020549">
    <property type="entry name" value="YbeY_CS"/>
</dbReference>
<dbReference type="NCBIfam" id="TIGR00043">
    <property type="entry name" value="rRNA maturation RNase YbeY"/>
    <property type="match status" value="1"/>
</dbReference>
<dbReference type="PANTHER" id="PTHR46986">
    <property type="entry name" value="ENDORIBONUCLEASE YBEY, CHLOROPLASTIC"/>
    <property type="match status" value="1"/>
</dbReference>
<dbReference type="PANTHER" id="PTHR46986:SF1">
    <property type="entry name" value="ENDORIBONUCLEASE YBEY, CHLOROPLASTIC"/>
    <property type="match status" value="1"/>
</dbReference>
<dbReference type="Pfam" id="PF02130">
    <property type="entry name" value="YbeY"/>
    <property type="match status" value="1"/>
</dbReference>
<dbReference type="SUPFAM" id="SSF55486">
    <property type="entry name" value="Metalloproteases ('zincins'), catalytic domain"/>
    <property type="match status" value="1"/>
</dbReference>
<dbReference type="PROSITE" id="PS01306">
    <property type="entry name" value="UPF0054"/>
    <property type="match status" value="1"/>
</dbReference>
<feature type="chain" id="PRO_1000089204" description="Endoribonuclease YbeY">
    <location>
        <begin position="1"/>
        <end position="157"/>
    </location>
</feature>
<feature type="binding site" evidence="1">
    <location>
        <position position="114"/>
    </location>
    <ligand>
        <name>Zn(2+)</name>
        <dbReference type="ChEBI" id="CHEBI:29105"/>
        <note>catalytic</note>
    </ligand>
</feature>
<feature type="binding site" evidence="1">
    <location>
        <position position="118"/>
    </location>
    <ligand>
        <name>Zn(2+)</name>
        <dbReference type="ChEBI" id="CHEBI:29105"/>
        <note>catalytic</note>
    </ligand>
</feature>
<feature type="binding site" evidence="1">
    <location>
        <position position="124"/>
    </location>
    <ligand>
        <name>Zn(2+)</name>
        <dbReference type="ChEBI" id="CHEBI:29105"/>
        <note>catalytic</note>
    </ligand>
</feature>
<sequence length="157" mass="17840">MSQVILDLQLACENHAGLPDEAQFQRWLDGVIPQFQEEAEVTIRLVDETESHDLNLTYRGKDKPTNVLSFPFEAPPGIEMPLLGDLIICRQVVEQEAQEQSKPLEAHWAHMVVHGSLHLLGYDHIDDDEAEEMESLETEIMLAMGYEDPYIAEKIAE</sequence>
<proteinExistence type="inferred from homology"/>
<reference key="1">
    <citation type="journal article" date="2008" name="Genome Res.">
        <title>Comparative genome analysis of Salmonella enteritidis PT4 and Salmonella gallinarum 287/91 provides insights into evolutionary and host adaptation pathways.</title>
        <authorList>
            <person name="Thomson N.R."/>
            <person name="Clayton D.J."/>
            <person name="Windhorst D."/>
            <person name="Vernikos G."/>
            <person name="Davidson S."/>
            <person name="Churcher C."/>
            <person name="Quail M.A."/>
            <person name="Stevens M."/>
            <person name="Jones M.A."/>
            <person name="Watson M."/>
            <person name="Barron A."/>
            <person name="Layton A."/>
            <person name="Pickard D."/>
            <person name="Kingsley R.A."/>
            <person name="Bignell A."/>
            <person name="Clark L."/>
            <person name="Harris B."/>
            <person name="Ormond D."/>
            <person name="Abdellah Z."/>
            <person name="Brooks K."/>
            <person name="Cherevach I."/>
            <person name="Chillingworth T."/>
            <person name="Woodward J."/>
            <person name="Norberczak H."/>
            <person name="Lord A."/>
            <person name="Arrowsmith C."/>
            <person name="Jagels K."/>
            <person name="Moule S."/>
            <person name="Mungall K."/>
            <person name="Saunders M."/>
            <person name="Whitehead S."/>
            <person name="Chabalgoity J.A."/>
            <person name="Maskell D."/>
            <person name="Humphreys T."/>
            <person name="Roberts M."/>
            <person name="Barrow P.A."/>
            <person name="Dougan G."/>
            <person name="Parkhill J."/>
        </authorList>
    </citation>
    <scope>NUCLEOTIDE SEQUENCE [LARGE SCALE GENOMIC DNA]</scope>
    <source>
        <strain>287/91 / NCTC 13346</strain>
    </source>
</reference>
<protein>
    <recommendedName>
        <fullName evidence="1">Endoribonuclease YbeY</fullName>
        <ecNumber evidence="1">3.1.-.-</ecNumber>
    </recommendedName>
</protein>
<name>YBEY_SALG2</name>
<organism>
    <name type="scientific">Salmonella gallinarum (strain 287/91 / NCTC 13346)</name>
    <dbReference type="NCBI Taxonomy" id="550538"/>
    <lineage>
        <taxon>Bacteria</taxon>
        <taxon>Pseudomonadati</taxon>
        <taxon>Pseudomonadota</taxon>
        <taxon>Gammaproteobacteria</taxon>
        <taxon>Enterobacterales</taxon>
        <taxon>Enterobacteriaceae</taxon>
        <taxon>Salmonella</taxon>
    </lineage>
</organism>
<accession>B5R815</accession>
<evidence type="ECO:0000255" key="1">
    <source>
        <dbReference type="HAMAP-Rule" id="MF_00009"/>
    </source>
</evidence>